<evidence type="ECO:0000250" key="1"/>
<evidence type="ECO:0000250" key="2">
    <source>
        <dbReference type="UniProtKB" id="Q13103"/>
    </source>
</evidence>
<evidence type="ECO:0000250" key="3">
    <source>
        <dbReference type="UniProtKB" id="Q62740"/>
    </source>
</evidence>
<evidence type="ECO:0000250" key="4">
    <source>
        <dbReference type="UniProtKB" id="Q8K1I3"/>
    </source>
</evidence>
<evidence type="ECO:0000269" key="5">
    <source>
    </source>
</evidence>
<evidence type="ECO:0000305" key="6"/>
<keyword id="KW-0903">Direct protein sequencing</keyword>
<keyword id="KW-1015">Disulfide bond</keyword>
<keyword id="KW-0597">Phosphoprotein</keyword>
<keyword id="KW-1185">Reference proteome</keyword>
<keyword id="KW-0964">Secreted</keyword>
<keyword id="KW-0732">Signal</keyword>
<protein>
    <recommendedName>
        <fullName>Secreted phosphoprotein 24</fullName>
        <shortName>Spp-24</shortName>
    </recommendedName>
    <alternativeName>
        <fullName>Secreted phosphoprotein 2</fullName>
    </alternativeName>
</protein>
<accession>Q27967</accession>
<accession>Q3ZBZ5</accession>
<feature type="signal peptide" evidence="5">
    <location>
        <begin position="1"/>
        <end position="23"/>
    </location>
</feature>
<feature type="chain" id="PRO_0000022402" description="Secreted phosphoprotein 24">
    <location>
        <begin position="24"/>
        <end position="203"/>
    </location>
</feature>
<feature type="modified residue" description="Phosphoserine" evidence="2">
    <location>
        <position position="90"/>
    </location>
</feature>
<feature type="modified residue" description="Phosphoserine" evidence="3">
    <location>
        <position position="138"/>
    </location>
</feature>
<feature type="modified residue" description="Phosphoserine" evidence="3">
    <location>
        <position position="139"/>
    </location>
</feature>
<feature type="modified residue" description="Phosphoserine" evidence="4">
    <location>
        <position position="166"/>
    </location>
</feature>
<feature type="modified residue" description="Phosphoserine" evidence="3">
    <location>
        <position position="175"/>
    </location>
</feature>
<feature type="disulfide bond" evidence="1">
    <location>
        <begin position="86"/>
        <end position="97"/>
    </location>
</feature>
<feature type="disulfide bond" evidence="1">
    <location>
        <begin position="110"/>
        <end position="128"/>
    </location>
</feature>
<name>SPP24_BOVIN</name>
<dbReference type="EMBL" id="U03872">
    <property type="protein sequence ID" value="AAA63582.1"/>
    <property type="molecule type" value="mRNA"/>
</dbReference>
<dbReference type="EMBL" id="BC103007">
    <property type="protein sequence ID" value="AAI03008.1"/>
    <property type="molecule type" value="mRNA"/>
</dbReference>
<dbReference type="PIR" id="I46051">
    <property type="entry name" value="I46051"/>
</dbReference>
<dbReference type="RefSeq" id="NP_776613.2">
    <property type="nucleotide sequence ID" value="NM_174188.3"/>
</dbReference>
<dbReference type="SMR" id="Q27967"/>
<dbReference type="FunCoup" id="Q27967">
    <property type="interactions" value="72"/>
</dbReference>
<dbReference type="STRING" id="9913.ENSBTAP00000002631"/>
<dbReference type="PaxDb" id="9913-ENSBTAP00000002631"/>
<dbReference type="GeneID" id="281500"/>
<dbReference type="KEGG" id="bta:281500"/>
<dbReference type="CTD" id="6694"/>
<dbReference type="VEuPathDB" id="HostDB:ENSBTAG00000002030"/>
<dbReference type="eggNOG" id="ENOG502S7TB">
    <property type="taxonomic scope" value="Eukaryota"/>
</dbReference>
<dbReference type="HOGENOM" id="CLU_115216_0_0_1"/>
<dbReference type="InParanoid" id="Q27967"/>
<dbReference type="OMA" id="CRSTVQM"/>
<dbReference type="OrthoDB" id="9944258at2759"/>
<dbReference type="TreeFam" id="TF335972"/>
<dbReference type="Reactome" id="R-BTA-114608">
    <property type="pathway name" value="Platelet degranulation"/>
</dbReference>
<dbReference type="Reactome" id="R-BTA-381426">
    <property type="pathway name" value="Regulation of Insulin-like Growth Factor (IGF) transport and uptake by Insulin-like Growth Factor Binding Proteins (IGFBPs)"/>
</dbReference>
<dbReference type="Reactome" id="R-BTA-8957275">
    <property type="pathway name" value="Post-translational protein phosphorylation"/>
</dbReference>
<dbReference type="Proteomes" id="UP000009136">
    <property type="component" value="Chromosome 3"/>
</dbReference>
<dbReference type="Bgee" id="ENSBTAG00000002030">
    <property type="expression patterns" value="Expressed in liver and 56 other cell types or tissues"/>
</dbReference>
<dbReference type="GO" id="GO:0005576">
    <property type="term" value="C:extracellular region"/>
    <property type="evidence" value="ECO:0007669"/>
    <property type="project" value="UniProtKB-SubCell"/>
</dbReference>
<dbReference type="GO" id="GO:0046849">
    <property type="term" value="P:bone remodeling"/>
    <property type="evidence" value="ECO:0007669"/>
    <property type="project" value="InterPro"/>
</dbReference>
<dbReference type="Gene3D" id="3.10.450.10">
    <property type="match status" value="1"/>
</dbReference>
<dbReference type="InterPro" id="IPR046350">
    <property type="entry name" value="Cystatin_sf"/>
</dbReference>
<dbReference type="InterPro" id="IPR010892">
    <property type="entry name" value="Spp-24"/>
</dbReference>
<dbReference type="PANTHER" id="PTHR15444">
    <property type="entry name" value="SECRETED PHOSPHOPROTEIN 24"/>
    <property type="match status" value="1"/>
</dbReference>
<dbReference type="PANTHER" id="PTHR15444:SF4">
    <property type="entry name" value="SECRETED PHOSPHOPROTEIN 24"/>
    <property type="match status" value="1"/>
</dbReference>
<dbReference type="Pfam" id="PF07448">
    <property type="entry name" value="Spp-24"/>
    <property type="match status" value="1"/>
</dbReference>
<dbReference type="SUPFAM" id="SSF54403">
    <property type="entry name" value="Cystatin/monellin"/>
    <property type="match status" value="1"/>
</dbReference>
<organism>
    <name type="scientific">Bos taurus</name>
    <name type="common">Bovine</name>
    <dbReference type="NCBI Taxonomy" id="9913"/>
    <lineage>
        <taxon>Eukaryota</taxon>
        <taxon>Metazoa</taxon>
        <taxon>Chordata</taxon>
        <taxon>Craniata</taxon>
        <taxon>Vertebrata</taxon>
        <taxon>Euteleostomi</taxon>
        <taxon>Mammalia</taxon>
        <taxon>Eutheria</taxon>
        <taxon>Laurasiatheria</taxon>
        <taxon>Artiodactyla</taxon>
        <taxon>Ruminantia</taxon>
        <taxon>Pecora</taxon>
        <taxon>Bovidae</taxon>
        <taxon>Bovinae</taxon>
        <taxon>Bos</taxon>
    </lineage>
</organism>
<proteinExistence type="evidence at protein level"/>
<sequence length="203" mass="23134">MEKMAMKMLVIFVLGMNHWTCTGFPVYDYDPASLKEALSASVAKVNSQSLSPYLFRAFRSSVKRVNALDEDSLTMDLEFRIQETTCRRESEADPATCDFQRGYHVPVAVCRSTVRMSAEQVQNVWVRCHWSSSSGSSSSEEMFFGDILGSSTSRNSYLLGLTPDRSRGEPLYEPSREMRRNFPLGNRRYSNPWPRARVNPGFE</sequence>
<reference key="1">
    <citation type="journal article" date="1995" name="J. Biol. Chem.">
        <title>Isolation and molecular cloning of a novel bone phosphoprotein related in sequence to the cystatin family of thiol protease inhibitors.</title>
        <authorList>
            <person name="Hu B."/>
            <person name="Coulson L."/>
            <person name="Moyer B."/>
            <person name="Price P.A."/>
        </authorList>
    </citation>
    <scope>NUCLEOTIDE SEQUENCE [MRNA]</scope>
    <scope>PROTEIN SEQUENCE OF 24-45; 143-160 AND 179-198</scope>
    <source>
        <tissue>Bone</tissue>
        <tissue>Liver</tissue>
    </source>
</reference>
<reference key="2">
    <citation type="journal article" date="1995" name="J. Biol. Chem.">
        <authorList>
            <person name="Hu B."/>
            <person name="Coulson L."/>
            <person name="Moyer B."/>
            <person name="Price P.A."/>
        </authorList>
    </citation>
    <scope>ERRATUM OF PUBMED:7814406</scope>
</reference>
<reference key="3">
    <citation type="submission" date="2005-08" db="EMBL/GenBank/DDBJ databases">
        <authorList>
            <consortium name="NIH - Mammalian Gene Collection (MGC) project"/>
        </authorList>
    </citation>
    <scope>NUCLEOTIDE SEQUENCE [LARGE SCALE MRNA]</scope>
    <source>
        <strain>Hereford</strain>
        <tissue>Rumen reticulum</tissue>
    </source>
</reference>
<gene>
    <name type="primary">SPP2</name>
    <name type="synonym">SPP24</name>
</gene>
<comment type="function">
    <text>Could coordinate an aspect of bone turnover.</text>
</comment>
<comment type="subcellular location">
    <subcellularLocation>
        <location>Secreted</location>
    </subcellularLocation>
</comment>
<comment type="tissue specificity">
    <text>In liver and bone but not in heart, lung, kidney, or spleen.</text>
</comment>
<comment type="PTM">
    <text>Multiply phosphorylated at serine residues in Ser-X-Glu/Ser(P) sequences, a recognition motif for phosphorylation by secretory pathway protein kinase.</text>
</comment>
<comment type="PTM">
    <text evidence="1">Phosphorylation sites are present in the extracellular medium.</text>
</comment>
<comment type="similarity">
    <text evidence="6">Belongs to the SPP2 family.</text>
</comment>